<feature type="chain" id="PRO_0000331439" description="Calmodulin regulator protein PCP4">
    <location>
        <begin position="1"/>
        <end position="62"/>
    </location>
</feature>
<feature type="domain" description="IQ" evidence="2">
    <location>
        <begin position="39"/>
        <end position="62"/>
    </location>
</feature>
<feature type="region of interest" description="Disordered" evidence="3">
    <location>
        <begin position="1"/>
        <end position="40"/>
    </location>
</feature>
<feature type="region of interest" description="Acidic; binds calcium and is required for modulating the calcium-binding kinetics of calmodulin" evidence="1">
    <location>
        <begin position="28"/>
        <end position="40"/>
    </location>
</feature>
<feature type="compositionally biased region" description="Basic and acidic residues" evidence="3">
    <location>
        <begin position="12"/>
        <end position="28"/>
    </location>
</feature>
<comment type="function">
    <text evidence="1">Functions as a modulator of calcium-binding by calmodulin. Thereby, regulates calmodulin activity and the different processes it controls. For instance, may play a role in neuronal differentiation through activation of calmodulin-dependent kinase signaling pathways.</text>
</comment>
<comment type="subunit">
    <text evidence="1">Binds to both calcium-free and calcium-bound calmodulin. The affinity for the calcium-bound form is 50-fold greater.</text>
</comment>
<comment type="domain">
    <text evidence="1">Mostly intrinsically disordered, with residual structure localized to the IQ domain which mediates the interaction with calmodulin.</text>
</comment>
<comment type="similarity">
    <text evidence="4">Belongs to the PCP4 family.</text>
</comment>
<name>PCP4_BOVIN</name>
<reference key="1">
    <citation type="submission" date="2006-06" db="EMBL/GenBank/DDBJ databases">
        <authorList>
            <consortium name="NIH - Mammalian Gene Collection (MGC) project"/>
        </authorList>
    </citation>
    <scope>NUCLEOTIDE SEQUENCE [LARGE SCALE MRNA]</scope>
    <source>
        <strain>Hereford</strain>
        <tissue>Ascending colon</tissue>
    </source>
</reference>
<sequence length="62" mass="6817">MSERQGAGTTNGKDKPSGENDGQKKVQEEFDIDMDAPETERAAVAIQSQFRKFQKKKAGSQS</sequence>
<accession>Q148C4</accession>
<keyword id="KW-0112">Calmodulin-binding</keyword>
<keyword id="KW-1185">Reference proteome</keyword>
<proteinExistence type="inferred from homology"/>
<dbReference type="EMBL" id="BC118489">
    <property type="protein sequence ID" value="AAI18490.1"/>
    <property type="molecule type" value="mRNA"/>
</dbReference>
<dbReference type="RefSeq" id="NP_001071604.1">
    <property type="nucleotide sequence ID" value="NM_001078136.1"/>
</dbReference>
<dbReference type="SMR" id="Q148C4"/>
<dbReference type="FunCoup" id="Q148C4">
    <property type="interactions" value="403"/>
</dbReference>
<dbReference type="STRING" id="9913.ENSBTAP00000067628"/>
<dbReference type="PeptideAtlas" id="Q148C4"/>
<dbReference type="Ensembl" id="ENSBTAT00000078431.2">
    <property type="protein sequence ID" value="ENSBTAP00000067628.1"/>
    <property type="gene ID" value="ENSBTAG00000051421.2"/>
</dbReference>
<dbReference type="GeneID" id="768324"/>
<dbReference type="KEGG" id="bta:768324"/>
<dbReference type="CTD" id="5121"/>
<dbReference type="VEuPathDB" id="HostDB:ENSBTAG00000051421"/>
<dbReference type="VGNC" id="VGNC:106858">
    <property type="gene designation" value="PCP4"/>
</dbReference>
<dbReference type="GeneTree" id="ENSGT00530000064267"/>
<dbReference type="InParanoid" id="Q148C4"/>
<dbReference type="OMA" id="PHCEGQM"/>
<dbReference type="OrthoDB" id="9944346at2759"/>
<dbReference type="Proteomes" id="UP000009136">
    <property type="component" value="Chromosome 1"/>
</dbReference>
<dbReference type="Bgee" id="ENSBTAG00000051421">
    <property type="expression patterns" value="Expressed in prefrontal cortex and 88 other cell types or tissues"/>
</dbReference>
<dbReference type="GO" id="GO:0005737">
    <property type="term" value="C:cytoplasm"/>
    <property type="evidence" value="ECO:0000318"/>
    <property type="project" value="GO_Central"/>
</dbReference>
<dbReference type="GO" id="GO:0032991">
    <property type="term" value="C:protein-containing complex"/>
    <property type="evidence" value="ECO:0007669"/>
    <property type="project" value="Ensembl"/>
</dbReference>
<dbReference type="GO" id="GO:0005509">
    <property type="term" value="F:calcium ion binding"/>
    <property type="evidence" value="ECO:0000250"/>
    <property type="project" value="UniProtKB"/>
</dbReference>
<dbReference type="GO" id="GO:0005516">
    <property type="term" value="F:calmodulin binding"/>
    <property type="evidence" value="ECO:0000250"/>
    <property type="project" value="UniProtKB"/>
</dbReference>
<dbReference type="GO" id="GO:1905291">
    <property type="term" value="P:positive regulation of CAMKK-AMPK signaling cascade"/>
    <property type="evidence" value="ECO:0000250"/>
    <property type="project" value="UniProtKB"/>
</dbReference>
<dbReference type="GO" id="GO:0045666">
    <property type="term" value="P:positive regulation of neuron differentiation"/>
    <property type="evidence" value="ECO:0000250"/>
    <property type="project" value="UniProtKB"/>
</dbReference>
<dbReference type="InterPro" id="IPR052142">
    <property type="entry name" value="Calmodulin_Regulator_PCP4-like"/>
</dbReference>
<dbReference type="PANTHER" id="PTHR15359:SF7">
    <property type="entry name" value="CALMODULIN REGULATOR PROTEIN PCP4"/>
    <property type="match status" value="1"/>
</dbReference>
<dbReference type="PANTHER" id="PTHR15359">
    <property type="entry name" value="IG-LIKE DOMAIN-CONTAINING PROTEIN"/>
    <property type="match status" value="1"/>
</dbReference>
<evidence type="ECO:0000250" key="1">
    <source>
        <dbReference type="UniProtKB" id="P48539"/>
    </source>
</evidence>
<evidence type="ECO:0000255" key="2">
    <source>
        <dbReference type="PROSITE-ProRule" id="PRU00116"/>
    </source>
</evidence>
<evidence type="ECO:0000256" key="3">
    <source>
        <dbReference type="SAM" id="MobiDB-lite"/>
    </source>
</evidence>
<evidence type="ECO:0000305" key="4"/>
<protein>
    <recommendedName>
        <fullName evidence="4">Calmodulin regulator protein PCP4</fullName>
    </recommendedName>
    <alternativeName>
        <fullName>Purkinje cell protein 4</fullName>
    </alternativeName>
</protein>
<gene>
    <name evidence="1" type="primary">PCP4</name>
</gene>
<organism>
    <name type="scientific">Bos taurus</name>
    <name type="common">Bovine</name>
    <dbReference type="NCBI Taxonomy" id="9913"/>
    <lineage>
        <taxon>Eukaryota</taxon>
        <taxon>Metazoa</taxon>
        <taxon>Chordata</taxon>
        <taxon>Craniata</taxon>
        <taxon>Vertebrata</taxon>
        <taxon>Euteleostomi</taxon>
        <taxon>Mammalia</taxon>
        <taxon>Eutheria</taxon>
        <taxon>Laurasiatheria</taxon>
        <taxon>Artiodactyla</taxon>
        <taxon>Ruminantia</taxon>
        <taxon>Pecora</taxon>
        <taxon>Bovidae</taxon>
        <taxon>Bovinae</taxon>
        <taxon>Bos</taxon>
    </lineage>
</organism>